<proteinExistence type="inferred from homology"/>
<dbReference type="EMBL" id="CP000849">
    <property type="protein sequence ID" value="ABV78805.1"/>
    <property type="molecule type" value="Genomic_DNA"/>
</dbReference>
<dbReference type="RefSeq" id="WP_011477707.1">
    <property type="nucleotide sequence ID" value="NC_009883.1"/>
</dbReference>
<dbReference type="SMR" id="A8GVC8"/>
<dbReference type="KEGG" id="rbo:A1I_02105"/>
<dbReference type="HOGENOM" id="CLU_098428_0_0_5"/>
<dbReference type="GO" id="GO:1990904">
    <property type="term" value="C:ribonucleoprotein complex"/>
    <property type="evidence" value="ECO:0007669"/>
    <property type="project" value="UniProtKB-KW"/>
</dbReference>
<dbReference type="GO" id="GO:0005840">
    <property type="term" value="C:ribosome"/>
    <property type="evidence" value="ECO:0007669"/>
    <property type="project" value="UniProtKB-KW"/>
</dbReference>
<dbReference type="GO" id="GO:0019843">
    <property type="term" value="F:rRNA binding"/>
    <property type="evidence" value="ECO:0007669"/>
    <property type="project" value="UniProtKB-UniRule"/>
</dbReference>
<dbReference type="GO" id="GO:0003735">
    <property type="term" value="F:structural constituent of ribosome"/>
    <property type="evidence" value="ECO:0007669"/>
    <property type="project" value="InterPro"/>
</dbReference>
<dbReference type="GO" id="GO:0006412">
    <property type="term" value="P:translation"/>
    <property type="evidence" value="ECO:0007669"/>
    <property type="project" value="UniProtKB-UniRule"/>
</dbReference>
<dbReference type="FunFam" id="3.30.1370.30:FF:000002">
    <property type="entry name" value="30S ribosomal protein S8"/>
    <property type="match status" value="1"/>
</dbReference>
<dbReference type="FunFam" id="3.30.1490.10:FF:000001">
    <property type="entry name" value="30S ribosomal protein S8"/>
    <property type="match status" value="1"/>
</dbReference>
<dbReference type="Gene3D" id="3.30.1370.30">
    <property type="match status" value="1"/>
</dbReference>
<dbReference type="Gene3D" id="3.30.1490.10">
    <property type="match status" value="1"/>
</dbReference>
<dbReference type="HAMAP" id="MF_01302_B">
    <property type="entry name" value="Ribosomal_uS8_B"/>
    <property type="match status" value="1"/>
</dbReference>
<dbReference type="InterPro" id="IPR000630">
    <property type="entry name" value="Ribosomal_uS8"/>
</dbReference>
<dbReference type="InterPro" id="IPR047863">
    <property type="entry name" value="Ribosomal_uS8_CS"/>
</dbReference>
<dbReference type="InterPro" id="IPR035987">
    <property type="entry name" value="Ribosomal_uS8_sf"/>
</dbReference>
<dbReference type="NCBIfam" id="NF001109">
    <property type="entry name" value="PRK00136.1"/>
    <property type="match status" value="1"/>
</dbReference>
<dbReference type="PANTHER" id="PTHR11758">
    <property type="entry name" value="40S RIBOSOMAL PROTEIN S15A"/>
    <property type="match status" value="1"/>
</dbReference>
<dbReference type="Pfam" id="PF00410">
    <property type="entry name" value="Ribosomal_S8"/>
    <property type="match status" value="1"/>
</dbReference>
<dbReference type="SUPFAM" id="SSF56047">
    <property type="entry name" value="Ribosomal protein S8"/>
    <property type="match status" value="1"/>
</dbReference>
<dbReference type="PROSITE" id="PS00053">
    <property type="entry name" value="RIBOSOMAL_S8"/>
    <property type="match status" value="1"/>
</dbReference>
<organism>
    <name type="scientific">Rickettsia bellii (strain OSU 85-389)</name>
    <dbReference type="NCBI Taxonomy" id="391896"/>
    <lineage>
        <taxon>Bacteria</taxon>
        <taxon>Pseudomonadati</taxon>
        <taxon>Pseudomonadota</taxon>
        <taxon>Alphaproteobacteria</taxon>
        <taxon>Rickettsiales</taxon>
        <taxon>Rickettsiaceae</taxon>
        <taxon>Rickettsieae</taxon>
        <taxon>Rickettsia</taxon>
        <taxon>belli group</taxon>
    </lineage>
</organism>
<accession>A8GVC8</accession>
<name>RS8_RICB8</name>
<sequence length="132" mass="14830">MSMTDNVADMLTRIRNAYKSKLINVSFPSSKIKTSILEVLQKEGYIKNYTSTPKDNISYTEVTLKYSANGDASICEIHRVSKPGKRVYSAIKDLKGYYNNMGIYILSTPYGVMSDREAHIKNVGGEVICKVF</sequence>
<keyword id="KW-0687">Ribonucleoprotein</keyword>
<keyword id="KW-0689">Ribosomal protein</keyword>
<keyword id="KW-0694">RNA-binding</keyword>
<keyword id="KW-0699">rRNA-binding</keyword>
<evidence type="ECO:0000255" key="1">
    <source>
        <dbReference type="HAMAP-Rule" id="MF_01302"/>
    </source>
</evidence>
<evidence type="ECO:0000305" key="2"/>
<comment type="function">
    <text evidence="1">One of the primary rRNA binding proteins, it binds directly to 16S rRNA central domain where it helps coordinate assembly of the platform of the 30S subunit.</text>
</comment>
<comment type="subunit">
    <text evidence="1">Part of the 30S ribosomal subunit. Contacts proteins S5 and S12.</text>
</comment>
<comment type="similarity">
    <text evidence="1">Belongs to the universal ribosomal protein uS8 family.</text>
</comment>
<protein>
    <recommendedName>
        <fullName evidence="1">Small ribosomal subunit protein uS8</fullName>
    </recommendedName>
    <alternativeName>
        <fullName evidence="2">30S ribosomal protein S8</fullName>
    </alternativeName>
</protein>
<feature type="chain" id="PRO_1000051794" description="Small ribosomal subunit protein uS8">
    <location>
        <begin position="1"/>
        <end position="132"/>
    </location>
</feature>
<reference key="1">
    <citation type="submission" date="2007-09" db="EMBL/GenBank/DDBJ databases">
        <title>Complete genome sequencing of Rickettsia bellii.</title>
        <authorList>
            <person name="Madan A."/>
            <person name="Lee H."/>
            <person name="Madan A."/>
            <person name="Yoon J.-G."/>
            <person name="Ryu G.-Y."/>
            <person name="Dasch G."/>
            <person name="Ereemeva M."/>
        </authorList>
    </citation>
    <scope>NUCLEOTIDE SEQUENCE [LARGE SCALE GENOMIC DNA]</scope>
    <source>
        <strain>OSU 85-389</strain>
    </source>
</reference>
<gene>
    <name evidence="1" type="primary">rpsH</name>
    <name type="ordered locus">A1I_02105</name>
</gene>